<organism>
    <name type="scientific">Francisella tularensis subsp. tularensis (strain WY96-3418)</name>
    <dbReference type="NCBI Taxonomy" id="418136"/>
    <lineage>
        <taxon>Bacteria</taxon>
        <taxon>Pseudomonadati</taxon>
        <taxon>Pseudomonadota</taxon>
        <taxon>Gammaproteobacteria</taxon>
        <taxon>Thiotrichales</taxon>
        <taxon>Francisellaceae</taxon>
        <taxon>Francisella</taxon>
    </lineage>
</organism>
<evidence type="ECO:0000255" key="1">
    <source>
        <dbReference type="HAMAP-Rule" id="MF_00105"/>
    </source>
</evidence>
<reference key="1">
    <citation type="journal article" date="2007" name="PLoS ONE">
        <title>Complete genomic characterization of a pathogenic A.II strain of Francisella tularensis subspecies tularensis.</title>
        <authorList>
            <person name="Beckstrom-Sternberg S.M."/>
            <person name="Auerbach R.K."/>
            <person name="Godbole S."/>
            <person name="Pearson J.V."/>
            <person name="Beckstrom-Sternberg J.S."/>
            <person name="Deng Z."/>
            <person name="Munk C."/>
            <person name="Kubota K."/>
            <person name="Zhou Y."/>
            <person name="Bruce D."/>
            <person name="Noronha J."/>
            <person name="Scheuermann R.H."/>
            <person name="Wang A."/>
            <person name="Wei X."/>
            <person name="Wang J."/>
            <person name="Hao J."/>
            <person name="Wagner D.M."/>
            <person name="Brettin T.S."/>
            <person name="Brown N."/>
            <person name="Gilna P."/>
            <person name="Keim P.S."/>
        </authorList>
    </citation>
    <scope>NUCLEOTIDE SEQUENCE [LARGE SCALE GENOMIC DNA]</scope>
    <source>
        <strain>WY96-3418</strain>
    </source>
</reference>
<sequence length="160" mass="17703">MANDRVPMTPAGEQALRAELDKLKKIERPAIIEAIAEARDHGDLKENAEYHAARERQGIIEGRIKDIESKLSNAQVIDVTKIQANGMVIFGATVTIMNVDTEEETTYKIVGEDEADIDNQKISVVAPLARALIKKEEGDEITLDTPKGKVTYEIVAVEYK</sequence>
<proteinExistence type="inferred from homology"/>
<dbReference type="EMBL" id="CP000608">
    <property type="protein sequence ID" value="ABO47203.1"/>
    <property type="molecule type" value="Genomic_DNA"/>
</dbReference>
<dbReference type="RefSeq" id="WP_003016773.1">
    <property type="nucleotide sequence ID" value="NC_009257.1"/>
</dbReference>
<dbReference type="SMR" id="A4IZ52"/>
<dbReference type="KEGG" id="ftw:FTW_1479"/>
<dbReference type="HOGENOM" id="CLU_101379_2_0_6"/>
<dbReference type="GO" id="GO:0003677">
    <property type="term" value="F:DNA binding"/>
    <property type="evidence" value="ECO:0007669"/>
    <property type="project" value="UniProtKB-UniRule"/>
</dbReference>
<dbReference type="GO" id="GO:0070063">
    <property type="term" value="F:RNA polymerase binding"/>
    <property type="evidence" value="ECO:0007669"/>
    <property type="project" value="InterPro"/>
</dbReference>
<dbReference type="GO" id="GO:0006354">
    <property type="term" value="P:DNA-templated transcription elongation"/>
    <property type="evidence" value="ECO:0007669"/>
    <property type="project" value="TreeGrafter"/>
</dbReference>
<dbReference type="GO" id="GO:0032784">
    <property type="term" value="P:regulation of DNA-templated transcription elongation"/>
    <property type="evidence" value="ECO:0007669"/>
    <property type="project" value="UniProtKB-UniRule"/>
</dbReference>
<dbReference type="FunFam" id="1.10.287.180:FF:000001">
    <property type="entry name" value="Transcription elongation factor GreA"/>
    <property type="match status" value="1"/>
</dbReference>
<dbReference type="FunFam" id="3.10.50.30:FF:000001">
    <property type="entry name" value="Transcription elongation factor GreA"/>
    <property type="match status" value="1"/>
</dbReference>
<dbReference type="Gene3D" id="3.10.50.30">
    <property type="entry name" value="Transcription elongation factor, GreA/GreB, C-terminal domain"/>
    <property type="match status" value="1"/>
</dbReference>
<dbReference type="Gene3D" id="1.10.287.180">
    <property type="entry name" value="Transcription elongation factor, GreA/GreB, N-terminal domain"/>
    <property type="match status" value="1"/>
</dbReference>
<dbReference type="HAMAP" id="MF_00105">
    <property type="entry name" value="GreA_GreB"/>
    <property type="match status" value="1"/>
</dbReference>
<dbReference type="InterPro" id="IPR036953">
    <property type="entry name" value="GreA/GreB_C_sf"/>
</dbReference>
<dbReference type="InterPro" id="IPR018151">
    <property type="entry name" value="TF_GreA/GreB_CS"/>
</dbReference>
<dbReference type="InterPro" id="IPR006359">
    <property type="entry name" value="Tscrpt_elong_fac_GreA"/>
</dbReference>
<dbReference type="InterPro" id="IPR028624">
    <property type="entry name" value="Tscrpt_elong_fac_GreA/B"/>
</dbReference>
<dbReference type="InterPro" id="IPR001437">
    <property type="entry name" value="Tscrpt_elong_fac_GreA/B_C"/>
</dbReference>
<dbReference type="InterPro" id="IPR023459">
    <property type="entry name" value="Tscrpt_elong_fac_GreA/B_fam"/>
</dbReference>
<dbReference type="InterPro" id="IPR022691">
    <property type="entry name" value="Tscrpt_elong_fac_GreA/B_N"/>
</dbReference>
<dbReference type="InterPro" id="IPR036805">
    <property type="entry name" value="Tscrpt_elong_fac_GreA/B_N_sf"/>
</dbReference>
<dbReference type="NCBIfam" id="TIGR01462">
    <property type="entry name" value="greA"/>
    <property type="match status" value="1"/>
</dbReference>
<dbReference type="NCBIfam" id="NF001261">
    <property type="entry name" value="PRK00226.1-2"/>
    <property type="match status" value="1"/>
</dbReference>
<dbReference type="NCBIfam" id="NF001263">
    <property type="entry name" value="PRK00226.1-4"/>
    <property type="match status" value="1"/>
</dbReference>
<dbReference type="NCBIfam" id="NF001264">
    <property type="entry name" value="PRK00226.1-5"/>
    <property type="match status" value="1"/>
</dbReference>
<dbReference type="PANTHER" id="PTHR30437">
    <property type="entry name" value="TRANSCRIPTION ELONGATION FACTOR GREA"/>
    <property type="match status" value="1"/>
</dbReference>
<dbReference type="PANTHER" id="PTHR30437:SF4">
    <property type="entry name" value="TRANSCRIPTION ELONGATION FACTOR GREA"/>
    <property type="match status" value="1"/>
</dbReference>
<dbReference type="Pfam" id="PF01272">
    <property type="entry name" value="GreA_GreB"/>
    <property type="match status" value="1"/>
</dbReference>
<dbReference type="Pfam" id="PF03449">
    <property type="entry name" value="GreA_GreB_N"/>
    <property type="match status" value="1"/>
</dbReference>
<dbReference type="PIRSF" id="PIRSF006092">
    <property type="entry name" value="GreA_GreB"/>
    <property type="match status" value="1"/>
</dbReference>
<dbReference type="SUPFAM" id="SSF54534">
    <property type="entry name" value="FKBP-like"/>
    <property type="match status" value="1"/>
</dbReference>
<dbReference type="SUPFAM" id="SSF46557">
    <property type="entry name" value="GreA transcript cleavage protein, N-terminal domain"/>
    <property type="match status" value="1"/>
</dbReference>
<dbReference type="PROSITE" id="PS00829">
    <property type="entry name" value="GREAB_1"/>
    <property type="match status" value="1"/>
</dbReference>
<accession>A4IZ52</accession>
<protein>
    <recommendedName>
        <fullName evidence="1">Transcription elongation factor GreA</fullName>
    </recommendedName>
    <alternativeName>
        <fullName evidence="1">Transcript cleavage factor GreA</fullName>
    </alternativeName>
</protein>
<feature type="chain" id="PRO_1000202859" description="Transcription elongation factor GreA">
    <location>
        <begin position="1"/>
        <end position="160"/>
    </location>
</feature>
<name>GREA_FRATW</name>
<gene>
    <name evidence="1" type="primary">greA</name>
    <name type="ordered locus">FTW_1479</name>
</gene>
<keyword id="KW-0238">DNA-binding</keyword>
<keyword id="KW-0804">Transcription</keyword>
<keyword id="KW-0805">Transcription regulation</keyword>
<comment type="function">
    <text evidence="1">Necessary for efficient RNA polymerase transcription elongation past template-encoded arresting sites. The arresting sites in DNA have the property of trapping a certain fraction of elongating RNA polymerases that pass through, resulting in locked ternary complexes. Cleavage of the nascent transcript by cleavage factors such as GreA or GreB allows the resumption of elongation from the new 3'terminus. GreA releases sequences of 2 to 3 nucleotides.</text>
</comment>
<comment type="similarity">
    <text evidence="1">Belongs to the GreA/GreB family.</text>
</comment>